<protein>
    <recommendedName>
        <fullName evidence="2">Small ribosomal subunit protein uS2</fullName>
    </recommendedName>
    <alternativeName>
        <fullName>30S ribosomal protein S2</fullName>
    </alternativeName>
</protein>
<comment type="similarity">
    <text evidence="2">Belongs to the universal ribosomal protein uS2 family.</text>
</comment>
<dbReference type="EMBL" id="AF034101">
    <property type="protein sequence ID" value="AAC00175.2"/>
    <property type="molecule type" value="Genomic_DNA"/>
</dbReference>
<dbReference type="EMBL" id="AL939124">
    <property type="protein sequence ID" value="CAA19416.1"/>
    <property type="molecule type" value="Genomic_DNA"/>
</dbReference>
<dbReference type="PIR" id="T34809">
    <property type="entry name" value="T34809"/>
</dbReference>
<dbReference type="RefSeq" id="NP_629758.1">
    <property type="nucleotide sequence ID" value="NC_003888.3"/>
</dbReference>
<dbReference type="SMR" id="O31212"/>
<dbReference type="FunCoup" id="O31212">
    <property type="interactions" value="349"/>
</dbReference>
<dbReference type="STRING" id="100226.gene:17763282"/>
<dbReference type="PaxDb" id="100226-SCO5624"/>
<dbReference type="KEGG" id="sco:SCO5624"/>
<dbReference type="PATRIC" id="fig|100226.15.peg.5713"/>
<dbReference type="eggNOG" id="COG0052">
    <property type="taxonomic scope" value="Bacteria"/>
</dbReference>
<dbReference type="HOGENOM" id="CLU_040318_2_3_11"/>
<dbReference type="InParanoid" id="O31212"/>
<dbReference type="OrthoDB" id="9808036at2"/>
<dbReference type="PhylomeDB" id="O31212"/>
<dbReference type="Proteomes" id="UP000001973">
    <property type="component" value="Chromosome"/>
</dbReference>
<dbReference type="GO" id="GO:0022627">
    <property type="term" value="C:cytosolic small ribosomal subunit"/>
    <property type="evidence" value="ECO:0000318"/>
    <property type="project" value="GO_Central"/>
</dbReference>
<dbReference type="GO" id="GO:0003735">
    <property type="term" value="F:structural constituent of ribosome"/>
    <property type="evidence" value="ECO:0000318"/>
    <property type="project" value="GO_Central"/>
</dbReference>
<dbReference type="GO" id="GO:0006412">
    <property type="term" value="P:translation"/>
    <property type="evidence" value="ECO:0007669"/>
    <property type="project" value="UniProtKB-UniRule"/>
</dbReference>
<dbReference type="CDD" id="cd01425">
    <property type="entry name" value="RPS2"/>
    <property type="match status" value="1"/>
</dbReference>
<dbReference type="FunFam" id="1.10.287.610:FF:000001">
    <property type="entry name" value="30S ribosomal protein S2"/>
    <property type="match status" value="1"/>
</dbReference>
<dbReference type="Gene3D" id="3.40.50.10490">
    <property type="entry name" value="Glucose-6-phosphate isomerase like protein, domain 1"/>
    <property type="match status" value="1"/>
</dbReference>
<dbReference type="Gene3D" id="1.10.287.610">
    <property type="entry name" value="Helix hairpin bin"/>
    <property type="match status" value="1"/>
</dbReference>
<dbReference type="HAMAP" id="MF_00291_B">
    <property type="entry name" value="Ribosomal_uS2_B"/>
    <property type="match status" value="1"/>
</dbReference>
<dbReference type="InterPro" id="IPR001865">
    <property type="entry name" value="Ribosomal_uS2"/>
</dbReference>
<dbReference type="InterPro" id="IPR005706">
    <property type="entry name" value="Ribosomal_uS2_bac/mit/plastid"/>
</dbReference>
<dbReference type="InterPro" id="IPR018130">
    <property type="entry name" value="Ribosomal_uS2_CS"/>
</dbReference>
<dbReference type="InterPro" id="IPR023591">
    <property type="entry name" value="Ribosomal_uS2_flav_dom_sf"/>
</dbReference>
<dbReference type="NCBIfam" id="TIGR01011">
    <property type="entry name" value="rpsB_bact"/>
    <property type="match status" value="1"/>
</dbReference>
<dbReference type="PANTHER" id="PTHR12534">
    <property type="entry name" value="30S RIBOSOMAL PROTEIN S2 PROKARYOTIC AND ORGANELLAR"/>
    <property type="match status" value="1"/>
</dbReference>
<dbReference type="PANTHER" id="PTHR12534:SF0">
    <property type="entry name" value="SMALL RIBOSOMAL SUBUNIT PROTEIN US2M"/>
    <property type="match status" value="1"/>
</dbReference>
<dbReference type="Pfam" id="PF00318">
    <property type="entry name" value="Ribosomal_S2"/>
    <property type="match status" value="1"/>
</dbReference>
<dbReference type="PRINTS" id="PR00395">
    <property type="entry name" value="RIBOSOMALS2"/>
</dbReference>
<dbReference type="SUPFAM" id="SSF52313">
    <property type="entry name" value="Ribosomal protein S2"/>
    <property type="match status" value="1"/>
</dbReference>
<dbReference type="PROSITE" id="PS00962">
    <property type="entry name" value="RIBOSOMAL_S2_1"/>
    <property type="match status" value="1"/>
</dbReference>
<sequence>MAVVTMRELLESGVHFGHQTRRWNPKMKRFIFTERNGIYIIDLLQSLSYIDRAYEFVKETVAHGGTVMFVGTKKQAQEAIAEQATRVGMPYVNQRWLGGMLTNFSTVYKRLQRLKELEQIDFEDVAASGLTKKELLVLSREKAKLEKTLGGIREMSKVPSAVWIVDTKKEHIAVGEARKLNIPVVAILDTNCDPDEVDHKIPGNDDAIRSVTLLTRVIADAVAEGLIARSGAAGGAKGDKAAGEPLAAWERDLLEGEKAEKKDDAEAAEKPAEAPAAEAPAAEAAEAPAAEAAPAEEPAAEAPAADAEQA</sequence>
<feature type="chain" id="PRO_0000134249" description="Small ribosomal subunit protein uS2">
    <location>
        <begin position="1"/>
        <end position="310"/>
    </location>
</feature>
<feature type="region of interest" description="Disordered" evidence="1">
    <location>
        <begin position="249"/>
        <end position="310"/>
    </location>
</feature>
<feature type="compositionally biased region" description="Basic and acidic residues" evidence="1">
    <location>
        <begin position="249"/>
        <end position="272"/>
    </location>
</feature>
<feature type="compositionally biased region" description="Low complexity" evidence="1">
    <location>
        <begin position="273"/>
        <end position="310"/>
    </location>
</feature>
<feature type="sequence conflict" description="In Ref. 2; CAA19416." evidence="2" ref="2">
    <original>H</original>
    <variation>Y</variation>
    <location>
        <position position="199"/>
    </location>
</feature>
<gene>
    <name type="primary">rpsB</name>
    <name type="ordered locus">SCO5624</name>
    <name type="ORF">SC2E1.41</name>
</gene>
<evidence type="ECO:0000256" key="1">
    <source>
        <dbReference type="SAM" id="MobiDB-lite"/>
    </source>
</evidence>
<evidence type="ECO:0000305" key="2"/>
<keyword id="KW-1185">Reference proteome</keyword>
<keyword id="KW-0687">Ribonucleoprotein</keyword>
<keyword id="KW-0689">Ribosomal protein</keyword>
<organism>
    <name type="scientific">Streptomyces coelicolor (strain ATCC BAA-471 / A3(2) / M145)</name>
    <dbReference type="NCBI Taxonomy" id="100226"/>
    <lineage>
        <taxon>Bacteria</taxon>
        <taxon>Bacillati</taxon>
        <taxon>Actinomycetota</taxon>
        <taxon>Actinomycetes</taxon>
        <taxon>Kitasatosporales</taxon>
        <taxon>Streptomycetaceae</taxon>
        <taxon>Streptomyces</taxon>
        <taxon>Streptomyces albidoflavus group</taxon>
    </lineage>
</organism>
<name>RS2_STRCO</name>
<accession>O31212</accession>
<accession>O69911</accession>
<reference key="1">
    <citation type="submission" date="1999-03" db="EMBL/GenBank/DDBJ databases">
        <authorList>
            <person name="Hoogvliet G."/>
            <person name="van Wezel G.P."/>
            <person name="Kraal B."/>
        </authorList>
    </citation>
    <scope>NUCLEOTIDE SEQUENCE [GENOMIC DNA]</scope>
    <source>
        <strain>ATCC BAA-471 / A3(2) / M145</strain>
    </source>
</reference>
<reference key="2">
    <citation type="journal article" date="2002" name="Nature">
        <title>Complete genome sequence of the model actinomycete Streptomyces coelicolor A3(2).</title>
        <authorList>
            <person name="Bentley S.D."/>
            <person name="Chater K.F."/>
            <person name="Cerdeno-Tarraga A.-M."/>
            <person name="Challis G.L."/>
            <person name="Thomson N.R."/>
            <person name="James K.D."/>
            <person name="Harris D.E."/>
            <person name="Quail M.A."/>
            <person name="Kieser H."/>
            <person name="Harper D."/>
            <person name="Bateman A."/>
            <person name="Brown S."/>
            <person name="Chandra G."/>
            <person name="Chen C.W."/>
            <person name="Collins M."/>
            <person name="Cronin A."/>
            <person name="Fraser A."/>
            <person name="Goble A."/>
            <person name="Hidalgo J."/>
            <person name="Hornsby T."/>
            <person name="Howarth S."/>
            <person name="Huang C.-H."/>
            <person name="Kieser T."/>
            <person name="Larke L."/>
            <person name="Murphy L.D."/>
            <person name="Oliver K."/>
            <person name="O'Neil S."/>
            <person name="Rabbinowitsch E."/>
            <person name="Rajandream M.A."/>
            <person name="Rutherford K.M."/>
            <person name="Rutter S."/>
            <person name="Seeger K."/>
            <person name="Saunders D."/>
            <person name="Sharp S."/>
            <person name="Squares R."/>
            <person name="Squares S."/>
            <person name="Taylor K."/>
            <person name="Warren T."/>
            <person name="Wietzorrek A."/>
            <person name="Woodward J.R."/>
            <person name="Barrell B.G."/>
            <person name="Parkhill J."/>
            <person name="Hopwood D.A."/>
        </authorList>
    </citation>
    <scope>NUCLEOTIDE SEQUENCE [LARGE SCALE GENOMIC DNA]</scope>
    <source>
        <strain>ATCC BAA-471 / A3(2) / M145</strain>
    </source>
</reference>
<proteinExistence type="inferred from homology"/>